<accession>Q4UZI9</accession>
<comment type="function">
    <text evidence="1">Involved in the catabolism of homogentisate (2,5-dihydroxyphenylacetate or 2,5-OH-PhAc), a central intermediate in the degradation of phenylalanine and tyrosine. Catalyzes the oxidative ring cleavage of the aromatic ring of homogentisate to yield maleylacetoacetate.</text>
</comment>
<comment type="catalytic activity">
    <reaction evidence="1">
        <text>homogentisate + O2 = 4-maleylacetoacetate + H(+)</text>
        <dbReference type="Rhea" id="RHEA:15449"/>
        <dbReference type="ChEBI" id="CHEBI:15378"/>
        <dbReference type="ChEBI" id="CHEBI:15379"/>
        <dbReference type="ChEBI" id="CHEBI:16169"/>
        <dbReference type="ChEBI" id="CHEBI:17105"/>
        <dbReference type="EC" id="1.13.11.5"/>
    </reaction>
</comment>
<comment type="cofactor">
    <cofactor evidence="1">
        <name>Fe cation</name>
        <dbReference type="ChEBI" id="CHEBI:24875"/>
    </cofactor>
</comment>
<comment type="pathway">
    <text evidence="1">Amino-acid degradation; L-phenylalanine degradation; acetoacetate and fumarate from L-phenylalanine: step 4/6.</text>
</comment>
<comment type="subunit">
    <text evidence="1">Hexamer; dimer of trimers.</text>
</comment>
<comment type="similarity">
    <text evidence="1">Belongs to the homogentisate dioxygenase family.</text>
</comment>
<proteinExistence type="inferred from homology"/>
<feature type="chain" id="PRO_0000225796" description="Homogentisate 1,2-dioxygenase">
    <location>
        <begin position="1"/>
        <end position="455"/>
    </location>
</feature>
<feature type="active site" description="Proton acceptor" evidence="1">
    <location>
        <position position="308"/>
    </location>
</feature>
<feature type="binding site" evidence="1">
    <location>
        <position position="351"/>
    </location>
    <ligand>
        <name>Fe cation</name>
        <dbReference type="ChEBI" id="CHEBI:24875"/>
    </ligand>
</feature>
<feature type="binding site" evidence="1">
    <location>
        <position position="357"/>
    </location>
    <ligand>
        <name>Fe cation</name>
        <dbReference type="ChEBI" id="CHEBI:24875"/>
    </ligand>
</feature>
<feature type="binding site" evidence="1">
    <location>
        <position position="366"/>
    </location>
    <ligand>
        <name>homogentisate</name>
        <dbReference type="ChEBI" id="CHEBI:16169"/>
    </ligand>
</feature>
<feature type="binding site" evidence="1">
    <location>
        <position position="387"/>
    </location>
    <ligand>
        <name>Fe cation</name>
        <dbReference type="ChEBI" id="CHEBI:24875"/>
    </ligand>
</feature>
<feature type="binding site" evidence="1">
    <location>
        <position position="387"/>
    </location>
    <ligand>
        <name>homogentisate</name>
        <dbReference type="ChEBI" id="CHEBI:16169"/>
    </ligand>
</feature>
<protein>
    <recommendedName>
        <fullName evidence="1">Homogentisate 1,2-dioxygenase</fullName>
        <shortName evidence="1">HGDO</shortName>
        <ecNumber evidence="1">1.13.11.5</ecNumber>
    </recommendedName>
    <alternativeName>
        <fullName evidence="1">Homogentisate oxygenase</fullName>
    </alternativeName>
    <alternativeName>
        <fullName evidence="1">Homogentisic acid oxidase</fullName>
    </alternativeName>
    <alternativeName>
        <fullName evidence="1">Homogentisicase</fullName>
    </alternativeName>
</protein>
<sequence length="455" mass="50406">MIQLDPTLLLSWRAGQHPDAPMHNDQRYMTGFGNEFASEAVADTLPVGQNSPQRVAHGLYAEQLSGTAFTAPRGENRRSWLYRMRPAAVHGTFSLIEQSQFHNDFGHGPVPPDQLRWSPLPLPQTPTDFIDGLYTMAGNGSPEAMNGVAVHLYAANASMQDRFFYNADGELLLVPQLGRLRVHTELGMLELEPQQIGVIPRGVRFRVELRDGTARGYVCENFGGLLHLPDLGPIGSNGLANPRDFETPCAAFEQREGRFELVAKFQGHLWRADIGHSPLDVVAWHGNYAPYRYDLRRFNTIGSISFDHPDPSIFTVLTSPSDTHGTANMDFAIFPPRWLVAQHTFRPPWFHRNVASEFMGLVHGVYDAKADGFAPGGASLHNCMSGHGPDAATFDKASQADLSRPDVITETMAFMFETRAVLRPTAQALHAPHRQGDYQQCWAGLRKAFQAPPAS</sequence>
<name>HGD_XANC8</name>
<keyword id="KW-0223">Dioxygenase</keyword>
<keyword id="KW-0408">Iron</keyword>
<keyword id="KW-0479">Metal-binding</keyword>
<keyword id="KW-0560">Oxidoreductase</keyword>
<keyword id="KW-0585">Phenylalanine catabolism</keyword>
<keyword id="KW-0828">Tyrosine catabolism</keyword>
<evidence type="ECO:0000255" key="1">
    <source>
        <dbReference type="HAMAP-Rule" id="MF_00334"/>
    </source>
</evidence>
<dbReference type="EC" id="1.13.11.5" evidence="1"/>
<dbReference type="EMBL" id="CP000050">
    <property type="protein sequence ID" value="AAY47534.1"/>
    <property type="molecule type" value="Genomic_DNA"/>
</dbReference>
<dbReference type="SMR" id="Q4UZI9"/>
<dbReference type="KEGG" id="xcb:XC_0452"/>
<dbReference type="HOGENOM" id="CLU_027174_0_0_6"/>
<dbReference type="UniPathway" id="UPA00139">
    <property type="reaction ID" value="UER00339"/>
</dbReference>
<dbReference type="Proteomes" id="UP000000420">
    <property type="component" value="Chromosome"/>
</dbReference>
<dbReference type="GO" id="GO:0005737">
    <property type="term" value="C:cytoplasm"/>
    <property type="evidence" value="ECO:0007669"/>
    <property type="project" value="TreeGrafter"/>
</dbReference>
<dbReference type="GO" id="GO:0004411">
    <property type="term" value="F:homogentisate 1,2-dioxygenase activity"/>
    <property type="evidence" value="ECO:0007669"/>
    <property type="project" value="UniProtKB-UniRule"/>
</dbReference>
<dbReference type="GO" id="GO:0005506">
    <property type="term" value="F:iron ion binding"/>
    <property type="evidence" value="ECO:0007669"/>
    <property type="project" value="UniProtKB-UniRule"/>
</dbReference>
<dbReference type="GO" id="GO:0006559">
    <property type="term" value="P:L-phenylalanine catabolic process"/>
    <property type="evidence" value="ECO:0007669"/>
    <property type="project" value="UniProtKB-UniRule"/>
</dbReference>
<dbReference type="GO" id="GO:0006572">
    <property type="term" value="P:tyrosine catabolic process"/>
    <property type="evidence" value="ECO:0007669"/>
    <property type="project" value="UniProtKB-UniRule"/>
</dbReference>
<dbReference type="CDD" id="cd07000">
    <property type="entry name" value="cupin_HGO_N"/>
    <property type="match status" value="1"/>
</dbReference>
<dbReference type="FunFam" id="2.60.120.10:FF:000053">
    <property type="entry name" value="Homogentisate 1,2-dioxygenase"/>
    <property type="match status" value="1"/>
</dbReference>
<dbReference type="Gene3D" id="2.60.120.10">
    <property type="entry name" value="Jelly Rolls"/>
    <property type="match status" value="1"/>
</dbReference>
<dbReference type="HAMAP" id="MF_00334">
    <property type="entry name" value="Homogentis_dioxygen"/>
    <property type="match status" value="1"/>
</dbReference>
<dbReference type="InterPro" id="IPR046451">
    <property type="entry name" value="HgmA_C"/>
</dbReference>
<dbReference type="InterPro" id="IPR046452">
    <property type="entry name" value="HgmA_N"/>
</dbReference>
<dbReference type="InterPro" id="IPR005708">
    <property type="entry name" value="Homogentis_dOase"/>
</dbReference>
<dbReference type="InterPro" id="IPR022950">
    <property type="entry name" value="Homogentis_dOase_bac"/>
</dbReference>
<dbReference type="InterPro" id="IPR014710">
    <property type="entry name" value="RmlC-like_jellyroll"/>
</dbReference>
<dbReference type="InterPro" id="IPR011051">
    <property type="entry name" value="RmlC_Cupin_sf"/>
</dbReference>
<dbReference type="NCBIfam" id="TIGR01015">
    <property type="entry name" value="hmgA"/>
    <property type="match status" value="1"/>
</dbReference>
<dbReference type="PANTHER" id="PTHR11056">
    <property type="entry name" value="HOMOGENTISATE 1,2-DIOXYGENASE"/>
    <property type="match status" value="1"/>
</dbReference>
<dbReference type="PANTHER" id="PTHR11056:SF0">
    <property type="entry name" value="HOMOGENTISATE 1,2-DIOXYGENASE"/>
    <property type="match status" value="1"/>
</dbReference>
<dbReference type="Pfam" id="PF04209">
    <property type="entry name" value="HgmA_C"/>
    <property type="match status" value="1"/>
</dbReference>
<dbReference type="Pfam" id="PF20510">
    <property type="entry name" value="HgmA_N"/>
    <property type="match status" value="1"/>
</dbReference>
<dbReference type="SUPFAM" id="SSF51182">
    <property type="entry name" value="RmlC-like cupins"/>
    <property type="match status" value="1"/>
</dbReference>
<reference key="1">
    <citation type="journal article" date="2005" name="Genome Res.">
        <title>Comparative and functional genomic analyses of the pathogenicity of phytopathogen Xanthomonas campestris pv. campestris.</title>
        <authorList>
            <person name="Qian W."/>
            <person name="Jia Y."/>
            <person name="Ren S.-X."/>
            <person name="He Y.-Q."/>
            <person name="Feng J.-X."/>
            <person name="Lu L.-F."/>
            <person name="Sun Q."/>
            <person name="Ying G."/>
            <person name="Tang D.-J."/>
            <person name="Tang H."/>
            <person name="Wu W."/>
            <person name="Hao P."/>
            <person name="Wang L."/>
            <person name="Jiang B.-L."/>
            <person name="Zeng S."/>
            <person name="Gu W.-Y."/>
            <person name="Lu G."/>
            <person name="Rong L."/>
            <person name="Tian Y."/>
            <person name="Yao Z."/>
            <person name="Fu G."/>
            <person name="Chen B."/>
            <person name="Fang R."/>
            <person name="Qiang B."/>
            <person name="Chen Z."/>
            <person name="Zhao G.-P."/>
            <person name="Tang J.-L."/>
            <person name="He C."/>
        </authorList>
    </citation>
    <scope>NUCLEOTIDE SEQUENCE [LARGE SCALE GENOMIC DNA]</scope>
    <source>
        <strain>8004</strain>
    </source>
</reference>
<gene>
    <name evidence="1" type="primary">hmgA</name>
    <name type="ordered locus">XC_0452</name>
</gene>
<organism>
    <name type="scientific">Xanthomonas campestris pv. campestris (strain 8004)</name>
    <dbReference type="NCBI Taxonomy" id="314565"/>
    <lineage>
        <taxon>Bacteria</taxon>
        <taxon>Pseudomonadati</taxon>
        <taxon>Pseudomonadota</taxon>
        <taxon>Gammaproteobacteria</taxon>
        <taxon>Lysobacterales</taxon>
        <taxon>Lysobacteraceae</taxon>
        <taxon>Xanthomonas</taxon>
    </lineage>
</organism>